<feature type="transit peptide" description="Mitochondrion" evidence="2">
    <location>
        <begin position="1"/>
        <end status="unknown"/>
    </location>
</feature>
<feature type="chain" id="PRO_0000432553" description="Short integuments 2, mitochondrial">
    <location>
        <begin status="unknown"/>
        <end position="386"/>
    </location>
</feature>
<feature type="domain" description="CP-type G" evidence="3">
    <location>
        <begin position="37"/>
        <end position="207"/>
    </location>
</feature>
<feature type="region of interest" description="G4" evidence="3">
    <location>
        <begin position="81"/>
        <end position="84"/>
    </location>
</feature>
<feature type="region of interest" description="G5" evidence="3">
    <location>
        <begin position="109"/>
        <end position="111"/>
    </location>
</feature>
<feature type="region of interest" description="G1" evidence="3">
    <location>
        <begin position="143"/>
        <end position="150"/>
    </location>
</feature>
<feature type="region of interest" description="G2" evidence="3">
    <location>
        <begin position="180"/>
        <end position="184"/>
    </location>
</feature>
<feature type="region of interest" description="G3" evidence="3">
    <location>
        <begin position="200"/>
        <end position="203"/>
    </location>
</feature>
<feature type="short sequence motif" description="DARXP motif">
    <location>
        <begin position="55"/>
        <end position="59"/>
    </location>
</feature>
<feature type="binding site" evidence="1">
    <location>
        <begin position="81"/>
        <end position="84"/>
    </location>
    <ligand>
        <name>GTP</name>
        <dbReference type="ChEBI" id="CHEBI:37565"/>
    </ligand>
</feature>
<feature type="binding site" evidence="1">
    <location>
        <begin position="109"/>
        <end position="110"/>
    </location>
    <ligand>
        <name>GTP</name>
        <dbReference type="ChEBI" id="CHEBI:37565"/>
    </ligand>
</feature>
<feature type="binding site" evidence="1">
    <location>
        <begin position="146"/>
        <end position="151"/>
    </location>
    <ligand>
        <name>GTP</name>
        <dbReference type="ChEBI" id="CHEBI:37565"/>
    </ligand>
</feature>
<feature type="binding site" evidence="1">
    <location>
        <position position="203"/>
    </location>
    <ligand>
        <name>GTP</name>
        <dbReference type="ChEBI" id="CHEBI:37565"/>
    </ligand>
</feature>
<feature type="mutagenesis site" description="In sin2-1; loss of function." evidence="5">
    <original>S</original>
    <variation>F</variation>
    <location>
        <position position="150"/>
    </location>
</feature>
<organism evidence="12">
    <name type="scientific">Arabidopsis thaliana</name>
    <name type="common">Mouse-ear cress</name>
    <dbReference type="NCBI Taxonomy" id="3702"/>
    <lineage>
        <taxon>Eukaryota</taxon>
        <taxon>Viridiplantae</taxon>
        <taxon>Streptophyta</taxon>
        <taxon>Embryophyta</taxon>
        <taxon>Tracheophyta</taxon>
        <taxon>Spermatophyta</taxon>
        <taxon>Magnoliopsida</taxon>
        <taxon>eudicotyledons</taxon>
        <taxon>Gunneridae</taxon>
        <taxon>Pentapetalae</taxon>
        <taxon>rosids</taxon>
        <taxon>malvids</taxon>
        <taxon>Brassicales</taxon>
        <taxon>Brassicaceae</taxon>
        <taxon>Camelineae</taxon>
        <taxon>Arabidopsis</taxon>
    </lineage>
</organism>
<gene>
    <name evidence="6" type="primary">SIN2</name>
    <name evidence="7" type="synonym">DGP1</name>
    <name evidence="10" type="ordered locus">At2g41670</name>
    <name evidence="11" type="ORF">T32G6.19</name>
</gene>
<dbReference type="EMBL" id="AY254472">
    <property type="protein sequence ID" value="AAP41843.1"/>
    <property type="molecule type" value="mRNA"/>
</dbReference>
<dbReference type="EMBL" id="AC002510">
    <property type="protein sequence ID" value="AAB84349.1"/>
    <property type="status" value="ALT_SEQ"/>
    <property type="molecule type" value="Genomic_DNA"/>
</dbReference>
<dbReference type="EMBL" id="CP002685">
    <property type="protein sequence ID" value="AEC10014.1"/>
    <property type="molecule type" value="Genomic_DNA"/>
</dbReference>
<dbReference type="EMBL" id="AY099738">
    <property type="protein sequence ID" value="AAM20589.1"/>
    <property type="molecule type" value="mRNA"/>
</dbReference>
<dbReference type="EMBL" id="BT000379">
    <property type="protein sequence ID" value="AAN15698.1"/>
    <property type="molecule type" value="mRNA"/>
</dbReference>
<dbReference type="PIR" id="T00823">
    <property type="entry name" value="T00823"/>
</dbReference>
<dbReference type="RefSeq" id="NP_850353.1">
    <property type="nucleotide sequence ID" value="NM_180022.2"/>
</dbReference>
<dbReference type="SMR" id="Q8L607"/>
<dbReference type="FunCoup" id="Q8L607">
    <property type="interactions" value="3448"/>
</dbReference>
<dbReference type="STRING" id="3702.Q8L607"/>
<dbReference type="PaxDb" id="3702-AT2G41670.1"/>
<dbReference type="ProteomicsDB" id="232538"/>
<dbReference type="EnsemblPlants" id="AT2G41670.1">
    <property type="protein sequence ID" value="AT2G41670.1"/>
    <property type="gene ID" value="AT2G41670"/>
</dbReference>
<dbReference type="GeneID" id="818765"/>
<dbReference type="Gramene" id="AT2G41670.1">
    <property type="protein sequence ID" value="AT2G41670.1"/>
    <property type="gene ID" value="AT2G41670"/>
</dbReference>
<dbReference type="KEGG" id="ath:AT2G41670"/>
<dbReference type="Araport" id="AT2G41670"/>
<dbReference type="TAIR" id="AT2G41670">
    <property type="gene designation" value="SIN2"/>
</dbReference>
<dbReference type="eggNOG" id="KOG2485">
    <property type="taxonomic scope" value="Eukaryota"/>
</dbReference>
<dbReference type="HOGENOM" id="CLU_011106_0_3_1"/>
<dbReference type="InParanoid" id="Q8L607"/>
<dbReference type="OMA" id="CKQDCIP"/>
<dbReference type="PhylomeDB" id="Q8L607"/>
<dbReference type="PRO" id="PR:Q8L607"/>
<dbReference type="Proteomes" id="UP000006548">
    <property type="component" value="Chromosome 2"/>
</dbReference>
<dbReference type="ExpressionAtlas" id="Q8L607">
    <property type="expression patterns" value="baseline and differential"/>
</dbReference>
<dbReference type="GO" id="GO:0009507">
    <property type="term" value="C:chloroplast"/>
    <property type="evidence" value="ECO:0007005"/>
    <property type="project" value="TAIR"/>
</dbReference>
<dbReference type="GO" id="GO:0005739">
    <property type="term" value="C:mitochondrion"/>
    <property type="evidence" value="ECO:0000314"/>
    <property type="project" value="TAIR"/>
</dbReference>
<dbReference type="GO" id="GO:0005525">
    <property type="term" value="F:GTP binding"/>
    <property type="evidence" value="ECO:0007669"/>
    <property type="project" value="UniProtKB-KW"/>
</dbReference>
<dbReference type="GO" id="GO:0016787">
    <property type="term" value="F:hydrolase activity"/>
    <property type="evidence" value="ECO:0007669"/>
    <property type="project" value="UniProtKB-KW"/>
</dbReference>
<dbReference type="GO" id="GO:0000911">
    <property type="term" value="P:cytokinesis by cell plate formation"/>
    <property type="evidence" value="ECO:0000315"/>
    <property type="project" value="TAIR"/>
</dbReference>
<dbReference type="GO" id="GO:0048481">
    <property type="term" value="P:plant ovule development"/>
    <property type="evidence" value="ECO:0000315"/>
    <property type="project" value="TAIR"/>
</dbReference>
<dbReference type="CDD" id="cd01856">
    <property type="entry name" value="YlqF"/>
    <property type="match status" value="1"/>
</dbReference>
<dbReference type="FunFam" id="3.40.50.300:FF:001008">
    <property type="entry name" value="Mitochondrial GTPase 1"/>
    <property type="match status" value="1"/>
</dbReference>
<dbReference type="Gene3D" id="1.10.1580.10">
    <property type="match status" value="1"/>
</dbReference>
<dbReference type="Gene3D" id="3.40.50.300">
    <property type="entry name" value="P-loop containing nucleotide triphosphate hydrolases"/>
    <property type="match status" value="1"/>
</dbReference>
<dbReference type="InterPro" id="IPR030378">
    <property type="entry name" value="G_CP_dom"/>
</dbReference>
<dbReference type="InterPro" id="IPR006073">
    <property type="entry name" value="GTP-bd"/>
</dbReference>
<dbReference type="InterPro" id="IPR023179">
    <property type="entry name" value="GTP-bd_ortho_bundle_sf"/>
</dbReference>
<dbReference type="InterPro" id="IPR027417">
    <property type="entry name" value="P-loop_NTPase"/>
</dbReference>
<dbReference type="PANTHER" id="PTHR45782">
    <property type="entry name" value="MITOCHONDRIAL RIBOSOME-ASSOCIATED GTPASE 1"/>
    <property type="match status" value="1"/>
</dbReference>
<dbReference type="PANTHER" id="PTHR45782:SF4">
    <property type="entry name" value="MITOCHONDRIAL RIBOSOME-ASSOCIATED GTPASE 1"/>
    <property type="match status" value="1"/>
</dbReference>
<dbReference type="Pfam" id="PF01926">
    <property type="entry name" value="MMR_HSR1"/>
    <property type="match status" value="1"/>
</dbReference>
<dbReference type="SUPFAM" id="SSF52540">
    <property type="entry name" value="P-loop containing nucleoside triphosphate hydrolases"/>
    <property type="match status" value="1"/>
</dbReference>
<dbReference type="PROSITE" id="PS51721">
    <property type="entry name" value="G_CP"/>
    <property type="match status" value="1"/>
</dbReference>
<reference key="1">
    <citation type="journal article" date="2006" name="Genetics">
        <title>Arabidopsis SHORT INTEGUMENTS 2 is a mitochondrial DAR GTPase.</title>
        <authorList>
            <person name="Hill T.A."/>
            <person name="Broadhvest J."/>
            <person name="Kuzoff R.K."/>
            <person name="Gasser C.S."/>
        </authorList>
    </citation>
    <scope>NUCLEOTIDE SEQUENCE [MRNA]</scope>
    <scope>FUNCTION</scope>
    <scope>SUBCELLULAR LOCATION</scope>
    <scope>TISSUE SPECIFICITY</scope>
    <scope>MUTAGENESIS OF SER-150</scope>
    <scope>DISRUPTION PHENOTYPE</scope>
    <scope>GENE FAMILY</scope>
    <scope>NOMENCLATURE</scope>
</reference>
<reference key="2">
    <citation type="journal article" date="1999" name="Nature">
        <title>Sequence and analysis of chromosome 2 of the plant Arabidopsis thaliana.</title>
        <authorList>
            <person name="Lin X."/>
            <person name="Kaul S."/>
            <person name="Rounsley S.D."/>
            <person name="Shea T.P."/>
            <person name="Benito M.-I."/>
            <person name="Town C.D."/>
            <person name="Fujii C.Y."/>
            <person name="Mason T.M."/>
            <person name="Bowman C.L."/>
            <person name="Barnstead M.E."/>
            <person name="Feldblyum T.V."/>
            <person name="Buell C.R."/>
            <person name="Ketchum K.A."/>
            <person name="Lee J.J."/>
            <person name="Ronning C.M."/>
            <person name="Koo H.L."/>
            <person name="Moffat K.S."/>
            <person name="Cronin L.A."/>
            <person name="Shen M."/>
            <person name="Pai G."/>
            <person name="Van Aken S."/>
            <person name="Umayam L."/>
            <person name="Tallon L.J."/>
            <person name="Gill J.E."/>
            <person name="Adams M.D."/>
            <person name="Carrera A.J."/>
            <person name="Creasy T.H."/>
            <person name="Goodman H.M."/>
            <person name="Somerville C.R."/>
            <person name="Copenhaver G.P."/>
            <person name="Preuss D."/>
            <person name="Nierman W.C."/>
            <person name="White O."/>
            <person name="Eisen J.A."/>
            <person name="Salzberg S.L."/>
            <person name="Fraser C.M."/>
            <person name="Venter J.C."/>
        </authorList>
    </citation>
    <scope>NUCLEOTIDE SEQUENCE [LARGE SCALE GENOMIC DNA]</scope>
    <source>
        <strain>cv. Columbia</strain>
    </source>
</reference>
<reference key="3">
    <citation type="journal article" date="2017" name="Plant J.">
        <title>Araport11: a complete reannotation of the Arabidopsis thaliana reference genome.</title>
        <authorList>
            <person name="Cheng C.Y."/>
            <person name="Krishnakumar V."/>
            <person name="Chan A.P."/>
            <person name="Thibaud-Nissen F."/>
            <person name="Schobel S."/>
            <person name="Town C.D."/>
        </authorList>
    </citation>
    <scope>GENOME REANNOTATION</scope>
    <source>
        <strain>cv. Columbia</strain>
    </source>
</reference>
<reference key="4">
    <citation type="journal article" date="2003" name="Science">
        <title>Empirical analysis of transcriptional activity in the Arabidopsis genome.</title>
        <authorList>
            <person name="Yamada K."/>
            <person name="Lim J."/>
            <person name="Dale J.M."/>
            <person name="Chen H."/>
            <person name="Shinn P."/>
            <person name="Palm C.J."/>
            <person name="Southwick A.M."/>
            <person name="Wu H.C."/>
            <person name="Kim C.J."/>
            <person name="Nguyen M."/>
            <person name="Pham P.K."/>
            <person name="Cheuk R.F."/>
            <person name="Karlin-Newmann G."/>
            <person name="Liu S.X."/>
            <person name="Lam B."/>
            <person name="Sakano H."/>
            <person name="Wu T."/>
            <person name="Yu G."/>
            <person name="Miranda M."/>
            <person name="Quach H.L."/>
            <person name="Tripp M."/>
            <person name="Chang C.H."/>
            <person name="Lee J.M."/>
            <person name="Toriumi M.J."/>
            <person name="Chan M.M."/>
            <person name="Tang C.C."/>
            <person name="Onodera C.S."/>
            <person name="Deng J.M."/>
            <person name="Akiyama K."/>
            <person name="Ansari Y."/>
            <person name="Arakawa T."/>
            <person name="Banh J."/>
            <person name="Banno F."/>
            <person name="Bowser L."/>
            <person name="Brooks S.Y."/>
            <person name="Carninci P."/>
            <person name="Chao Q."/>
            <person name="Choy N."/>
            <person name="Enju A."/>
            <person name="Goldsmith A.D."/>
            <person name="Gurjal M."/>
            <person name="Hansen N.F."/>
            <person name="Hayashizaki Y."/>
            <person name="Johnson-Hopson C."/>
            <person name="Hsuan V.W."/>
            <person name="Iida K."/>
            <person name="Karnes M."/>
            <person name="Khan S."/>
            <person name="Koesema E."/>
            <person name="Ishida J."/>
            <person name="Jiang P.X."/>
            <person name="Jones T."/>
            <person name="Kawai J."/>
            <person name="Kamiya A."/>
            <person name="Meyers C."/>
            <person name="Nakajima M."/>
            <person name="Narusaka M."/>
            <person name="Seki M."/>
            <person name="Sakurai T."/>
            <person name="Satou M."/>
            <person name="Tamse R."/>
            <person name="Vaysberg M."/>
            <person name="Wallender E.K."/>
            <person name="Wong C."/>
            <person name="Yamamura Y."/>
            <person name="Yuan S."/>
            <person name="Shinozaki K."/>
            <person name="Davis R.W."/>
            <person name="Theologis A."/>
            <person name="Ecker J.R."/>
        </authorList>
    </citation>
    <scope>NUCLEOTIDE SEQUENCE [LARGE SCALE MRNA]</scope>
    <source>
        <strain>cv. Columbia</strain>
    </source>
</reference>
<reference key="5">
    <citation type="journal article" date="1998" name="Gene">
        <title>Analysis of the genomic organisation of a small chromosome of Leishmania braziliensis M2903 reveals two genes encoding GTP-binding proteins, one of which belongs to a new G-protein family and is an antigen.</title>
        <authorList>
            <person name="Fu G."/>
            <person name="Melville S."/>
            <person name="Brewster S."/>
            <person name="Warner J."/>
            <person name="Barker D.C."/>
        </authorList>
    </citation>
    <scope>DOMAIN</scope>
    <scope>GENE FAMILY</scope>
</reference>
<reference key="6">
    <citation type="journal article" date="2000" name="Genetics">
        <title>SHORT INTEGUMENTS 2 promotes growth during Arabidopsis reproductive development.</title>
        <authorList>
            <person name="Broadhvest J."/>
            <person name="Baker S.C."/>
            <person name="Gasser C.S."/>
        </authorList>
    </citation>
    <scope>FUNCTION</scope>
</reference>
<sequence length="386" mass="42984">MVMMLKKTVKKGLIGGMSFAKDAGKINWFPGHMAAATRAIRNRLKLSDLVIEVRDARIPLSSANEDLQSQMSAKRRIIALNKKDLANPNVLNKWTRHFESSKQDCIAINAHSRSSVMKLLDLVELKLKEVIAREPTLLVMVVGVPNVGKSALINSIHQIAAARFPVQERLKRATVGPLPGVTQDIAGFKIAHRPSIYVLDSPGVLVPSIPDIETGLKLALSGSVKDSVVGEERIAQYFLAILNIRGTPLHWKYLVEGINEGPHADCIDKPSYNLKDLRHQRTKQPDSSALHYVGDMISEVQRSLYITLSEFDGDTEDENDLECLIEQQFEVLQKALKIPHKASEARLMVSKKFLTLFRTGRLGPFILDDVPETETDHPNSKRVVVL</sequence>
<name>SIN2_ARATH</name>
<comment type="function">
    <text evidence="4 5">GTPase that may function in mitochondrial ribosome assembly (Probable). Involved in a variety of growth processes during vegetative development and promotes growth and cell division in the developing integuments (PubMed:10835408, PubMed:16849600).</text>
</comment>
<comment type="subcellular location">
    <subcellularLocation>
        <location evidence="5">Mitochondrion</location>
    </subcellularLocation>
</comment>
<comment type="tissue specificity">
    <text evidence="5">Expressed in seedlings, roots, leaves, stems, inflorescences and siliques.</text>
</comment>
<comment type="domain">
    <text evidence="8">In contrast to other GTP-binding proteins, this family is characterized by a circular permutation of the GTPase motifs described by a G4-G1-G3 pattern.</text>
</comment>
<comment type="domain">
    <text evidence="9">The DARXP motif is also sometime designated as G6 region.</text>
</comment>
<comment type="disruption phenotype">
    <text evidence="5">No visible phenotype when heterozygous, but completely female sterile when homozygous.</text>
</comment>
<comment type="similarity">
    <text evidence="3">Belongs to the TRAFAC class YlqF/YawG GTPase family. MTG1 subfamily.</text>
</comment>
<comment type="sequence caution" evidence="8">
    <conflict type="erroneous gene model prediction">
        <sequence resource="EMBL-CDS" id="AAB84349"/>
    </conflict>
</comment>
<keyword id="KW-0342">GTP-binding</keyword>
<keyword id="KW-0378">Hydrolase</keyword>
<keyword id="KW-0496">Mitochondrion</keyword>
<keyword id="KW-0547">Nucleotide-binding</keyword>
<keyword id="KW-1185">Reference proteome</keyword>
<keyword id="KW-0809">Transit peptide</keyword>
<accession>Q8L607</accession>
<accession>O22228</accession>
<evidence type="ECO:0000250" key="1">
    <source>
        <dbReference type="UniProtKB" id="O31743"/>
    </source>
</evidence>
<evidence type="ECO:0000255" key="2"/>
<evidence type="ECO:0000255" key="3">
    <source>
        <dbReference type="PROSITE-ProRule" id="PRU01058"/>
    </source>
</evidence>
<evidence type="ECO:0000269" key="4">
    <source>
    </source>
</evidence>
<evidence type="ECO:0000269" key="5">
    <source>
    </source>
</evidence>
<evidence type="ECO:0000303" key="6">
    <source>
    </source>
</evidence>
<evidence type="ECO:0000303" key="7">
    <source>
    </source>
</evidence>
<evidence type="ECO:0000305" key="8"/>
<evidence type="ECO:0000305" key="9">
    <source>
    </source>
</evidence>
<evidence type="ECO:0000312" key="10">
    <source>
        <dbReference type="Araport" id="AT2G41670"/>
    </source>
</evidence>
<evidence type="ECO:0000312" key="11">
    <source>
        <dbReference type="EMBL" id="AAB84349.1"/>
    </source>
</evidence>
<evidence type="ECO:0000312" key="12">
    <source>
        <dbReference type="EMBL" id="AAM20589.1"/>
    </source>
</evidence>
<protein>
    <recommendedName>
        <fullName evidence="6">Short integuments 2, mitochondrial</fullName>
    </recommendedName>
    <alternativeName>
        <fullName evidence="7">DAR GTPase 1</fullName>
    </alternativeName>
</protein>
<proteinExistence type="evidence at protein level"/>